<keyword id="KW-0028">Amino-acid biosynthesis</keyword>
<keyword id="KW-0368">Histidine biosynthesis</keyword>
<keyword id="KW-0378">Hydrolase</keyword>
<keyword id="KW-0486">Methionine biosynthesis</keyword>
<keyword id="KW-0511">Multifunctional enzyme</keyword>
<keyword id="KW-0521">NADP</keyword>
<keyword id="KW-0554">One-carbon metabolism</keyword>
<keyword id="KW-0560">Oxidoreductase</keyword>
<keyword id="KW-0658">Purine biosynthesis</keyword>
<keyword id="KW-1185">Reference proteome</keyword>
<name>FOLD_MYCGE</name>
<organism>
    <name type="scientific">Mycoplasma genitalium (strain ATCC 33530 / DSM 19775 / NCTC 10195 / G37)</name>
    <name type="common">Mycoplasmoides genitalium</name>
    <dbReference type="NCBI Taxonomy" id="243273"/>
    <lineage>
        <taxon>Bacteria</taxon>
        <taxon>Bacillati</taxon>
        <taxon>Mycoplasmatota</taxon>
        <taxon>Mycoplasmoidales</taxon>
        <taxon>Mycoplasmoidaceae</taxon>
        <taxon>Mycoplasmoides</taxon>
    </lineage>
</organism>
<proteinExistence type="inferred from homology"/>
<evidence type="ECO:0000255" key="1">
    <source>
        <dbReference type="HAMAP-Rule" id="MF_01576"/>
    </source>
</evidence>
<evidence type="ECO:0000269" key="2">
    <source>
    </source>
</evidence>
<dbReference type="EC" id="1.5.1.5" evidence="1"/>
<dbReference type="EC" id="3.5.4.9" evidence="1"/>
<dbReference type="EMBL" id="L43967">
    <property type="protein sequence ID" value="AAC71229.2"/>
    <property type="molecule type" value="Genomic_DNA"/>
</dbReference>
<dbReference type="PIR" id="D64201">
    <property type="entry name" value="D64201"/>
</dbReference>
<dbReference type="RefSeq" id="WP_009885972.1">
    <property type="nucleotide sequence ID" value="NC_000908.2"/>
</dbReference>
<dbReference type="SMR" id="P47259"/>
<dbReference type="FunCoup" id="P47259">
    <property type="interactions" value="161"/>
</dbReference>
<dbReference type="STRING" id="243273.MG_013"/>
<dbReference type="GeneID" id="88282128"/>
<dbReference type="KEGG" id="mge:MG_013"/>
<dbReference type="eggNOG" id="COG0190">
    <property type="taxonomic scope" value="Bacteria"/>
</dbReference>
<dbReference type="HOGENOM" id="CLU_034045_2_0_14"/>
<dbReference type="InParanoid" id="P47259"/>
<dbReference type="OrthoDB" id="9803580at2"/>
<dbReference type="BioCyc" id="MGEN243273:G1GJ2-13-MONOMER"/>
<dbReference type="UniPathway" id="UPA00193"/>
<dbReference type="Proteomes" id="UP000000807">
    <property type="component" value="Chromosome"/>
</dbReference>
<dbReference type="GO" id="GO:0005829">
    <property type="term" value="C:cytosol"/>
    <property type="evidence" value="ECO:0000318"/>
    <property type="project" value="GO_Central"/>
</dbReference>
<dbReference type="GO" id="GO:0004477">
    <property type="term" value="F:methenyltetrahydrofolate cyclohydrolase activity"/>
    <property type="evidence" value="ECO:0000318"/>
    <property type="project" value="GO_Central"/>
</dbReference>
<dbReference type="GO" id="GO:0004488">
    <property type="term" value="F:methylenetetrahydrofolate dehydrogenase (NADP+) activity"/>
    <property type="evidence" value="ECO:0000318"/>
    <property type="project" value="GO_Central"/>
</dbReference>
<dbReference type="GO" id="GO:0000105">
    <property type="term" value="P:L-histidine biosynthetic process"/>
    <property type="evidence" value="ECO:0007669"/>
    <property type="project" value="UniProtKB-KW"/>
</dbReference>
<dbReference type="GO" id="GO:0009086">
    <property type="term" value="P:methionine biosynthetic process"/>
    <property type="evidence" value="ECO:0007669"/>
    <property type="project" value="UniProtKB-KW"/>
</dbReference>
<dbReference type="GO" id="GO:0006164">
    <property type="term" value="P:purine nucleotide biosynthetic process"/>
    <property type="evidence" value="ECO:0007669"/>
    <property type="project" value="UniProtKB-KW"/>
</dbReference>
<dbReference type="GO" id="GO:0035999">
    <property type="term" value="P:tetrahydrofolate interconversion"/>
    <property type="evidence" value="ECO:0000318"/>
    <property type="project" value="GO_Central"/>
</dbReference>
<dbReference type="CDD" id="cd01080">
    <property type="entry name" value="NAD_bind_m-THF_DH_Cyclohyd"/>
    <property type="match status" value="1"/>
</dbReference>
<dbReference type="FunFam" id="3.40.50.720:FF:001790">
    <property type="entry name" value="Bifunctional protein FolD"/>
    <property type="match status" value="1"/>
</dbReference>
<dbReference type="FunFam" id="3.40.50.10860:FF:000005">
    <property type="entry name" value="C-1-tetrahydrofolate synthase, cytoplasmic, putative"/>
    <property type="match status" value="1"/>
</dbReference>
<dbReference type="Gene3D" id="3.40.50.10860">
    <property type="entry name" value="Leucine Dehydrogenase, chain A, domain 1"/>
    <property type="match status" value="1"/>
</dbReference>
<dbReference type="Gene3D" id="3.40.50.720">
    <property type="entry name" value="NAD(P)-binding Rossmann-like Domain"/>
    <property type="match status" value="1"/>
</dbReference>
<dbReference type="HAMAP" id="MF_01576">
    <property type="entry name" value="THF_DHG_CYH"/>
    <property type="match status" value="1"/>
</dbReference>
<dbReference type="InterPro" id="IPR046346">
    <property type="entry name" value="Aminoacid_DH-like_N_sf"/>
</dbReference>
<dbReference type="InterPro" id="IPR036291">
    <property type="entry name" value="NAD(P)-bd_dom_sf"/>
</dbReference>
<dbReference type="InterPro" id="IPR000672">
    <property type="entry name" value="THF_DH/CycHdrlase"/>
</dbReference>
<dbReference type="InterPro" id="IPR020630">
    <property type="entry name" value="THF_DH/CycHdrlase_cat_dom"/>
</dbReference>
<dbReference type="InterPro" id="IPR020867">
    <property type="entry name" value="THF_DH/CycHdrlase_CS"/>
</dbReference>
<dbReference type="InterPro" id="IPR020631">
    <property type="entry name" value="THF_DH/CycHdrlase_NAD-bd_dom"/>
</dbReference>
<dbReference type="PANTHER" id="PTHR48099:SF5">
    <property type="entry name" value="C-1-TETRAHYDROFOLATE SYNTHASE, CYTOPLASMIC"/>
    <property type="match status" value="1"/>
</dbReference>
<dbReference type="PANTHER" id="PTHR48099">
    <property type="entry name" value="C-1-TETRAHYDROFOLATE SYNTHASE, CYTOPLASMIC-RELATED"/>
    <property type="match status" value="1"/>
</dbReference>
<dbReference type="Pfam" id="PF00763">
    <property type="entry name" value="THF_DHG_CYH"/>
    <property type="match status" value="1"/>
</dbReference>
<dbReference type="Pfam" id="PF02882">
    <property type="entry name" value="THF_DHG_CYH_C"/>
    <property type="match status" value="1"/>
</dbReference>
<dbReference type="PRINTS" id="PR00085">
    <property type="entry name" value="THFDHDRGNASE"/>
</dbReference>
<dbReference type="SUPFAM" id="SSF53223">
    <property type="entry name" value="Aminoacid dehydrogenase-like, N-terminal domain"/>
    <property type="match status" value="1"/>
</dbReference>
<dbReference type="SUPFAM" id="SSF51735">
    <property type="entry name" value="NAD(P)-binding Rossmann-fold domains"/>
    <property type="match status" value="1"/>
</dbReference>
<dbReference type="PROSITE" id="PS00766">
    <property type="entry name" value="THF_DHG_CYH_1"/>
    <property type="match status" value="1"/>
</dbReference>
<dbReference type="PROSITE" id="PS00767">
    <property type="entry name" value="THF_DHG_CYH_2"/>
    <property type="match status" value="1"/>
</dbReference>
<feature type="chain" id="PRO_0000199310" description="Bifunctional protein FolD">
    <location>
        <begin position="1"/>
        <end position="273"/>
    </location>
</feature>
<feature type="binding site" evidence="1">
    <location>
        <begin position="149"/>
        <end position="151"/>
    </location>
    <ligand>
        <name>NADP(+)</name>
        <dbReference type="ChEBI" id="CHEBI:58349"/>
    </ligand>
</feature>
<feature type="binding site" evidence="1">
    <location>
        <position position="215"/>
    </location>
    <ligand>
        <name>NADP(+)</name>
        <dbReference type="ChEBI" id="CHEBI:58349"/>
    </ligand>
</feature>
<gene>
    <name evidence="1" type="primary">folD</name>
    <name type="ordered locus">MG013</name>
</gene>
<accession>P47259</accession>
<protein>
    <recommendedName>
        <fullName evidence="1">Bifunctional protein FolD</fullName>
    </recommendedName>
    <domain>
        <recommendedName>
            <fullName evidence="1">Methylenetetrahydrofolate dehydrogenase</fullName>
            <ecNumber evidence="1">1.5.1.5</ecNumber>
        </recommendedName>
    </domain>
    <domain>
        <recommendedName>
            <fullName evidence="1">Methenyltetrahydrofolate cyclohydrolase</fullName>
            <ecNumber evidence="1">3.5.4.9</ecNumber>
        </recommendedName>
    </domain>
</protein>
<sequence>MSFDGKLKAQSILETYKNFDWSKCKLVIIQANDDDSSDSFIKQKLIACNTVGAKSELIKLSNQITQAELIEKIISLNHDVNVTGIILQLPVYPHLDKNSLLEAINPLKDVDGLTTNHLAEIKPCIVEAIITLKELFNLEFNNQKIVVVGLGITGGKPIYEFLKTSGYKVQACDKDTPNTFELIKSADIVFTAIGKSHFFQAKNFKKGVILFDIGVSRNKQNKLCGDINPEGIEKKARWWTKTPGGVGPFTVLAIIKNLWILHEKNKRCLQSSI</sequence>
<reference key="1">
    <citation type="journal article" date="1995" name="Science">
        <title>The minimal gene complement of Mycoplasma genitalium.</title>
        <authorList>
            <person name="Fraser C.M."/>
            <person name="Gocayne J.D."/>
            <person name="White O."/>
            <person name="Adams M.D."/>
            <person name="Clayton R.A."/>
            <person name="Fleischmann R.D."/>
            <person name="Bult C.J."/>
            <person name="Kerlavage A.R."/>
            <person name="Sutton G.G."/>
            <person name="Kelley J.M."/>
            <person name="Fritchman J.L."/>
            <person name="Weidman J.F."/>
            <person name="Small K.V."/>
            <person name="Sandusky M."/>
            <person name="Fuhrmann J.L."/>
            <person name="Nguyen D.T."/>
            <person name="Utterback T.R."/>
            <person name="Saudek D.M."/>
            <person name="Phillips C.A."/>
            <person name="Merrick J.M."/>
            <person name="Tomb J.-F."/>
            <person name="Dougherty B.A."/>
            <person name="Bott K.F."/>
            <person name="Hu P.-C."/>
            <person name="Lucier T.S."/>
            <person name="Peterson S.N."/>
            <person name="Smith H.O."/>
            <person name="Hutchison C.A. III"/>
            <person name="Venter J.C."/>
        </authorList>
    </citation>
    <scope>NUCLEOTIDE SEQUENCE [LARGE SCALE GENOMIC DNA]</scope>
    <source>
        <strain>ATCC 33530 / DSM 19775 / NCTC 10195 / G37</strain>
    </source>
</reference>
<reference key="2">
    <citation type="journal article" date="2006" name="Proc. Natl. Acad. Sci. U.S.A.">
        <title>Essential genes of a minimal bacterium.</title>
        <authorList>
            <person name="Glass J.I."/>
            <person name="Assad-Garcia N."/>
            <person name="Alperovich N."/>
            <person name="Yooseph S."/>
            <person name="Lewis M.R."/>
            <person name="Maruf M."/>
            <person name="Hutchison C.A. III"/>
            <person name="Smith H.O."/>
            <person name="Venter J.C."/>
        </authorList>
    </citation>
    <scope>SEQUENCE REVISION</scope>
    <scope>DISRUPTION PHENOTYPE</scope>
    <source>
        <strain>ATCC 33530 / DSM 19775 / NCTC 10195 / G37</strain>
    </source>
</reference>
<comment type="function">
    <text evidence="1">Catalyzes the oxidation of 5,10-methylenetetrahydrofolate to 5,10-methenyltetrahydrofolate and then the hydrolysis of 5,10-methenyltetrahydrofolate to 10-formyltetrahydrofolate.</text>
</comment>
<comment type="catalytic activity">
    <reaction evidence="1">
        <text>(6R)-5,10-methylene-5,6,7,8-tetrahydrofolate + NADP(+) = (6R)-5,10-methenyltetrahydrofolate + NADPH</text>
        <dbReference type="Rhea" id="RHEA:22812"/>
        <dbReference type="ChEBI" id="CHEBI:15636"/>
        <dbReference type="ChEBI" id="CHEBI:57455"/>
        <dbReference type="ChEBI" id="CHEBI:57783"/>
        <dbReference type="ChEBI" id="CHEBI:58349"/>
        <dbReference type="EC" id="1.5.1.5"/>
    </reaction>
</comment>
<comment type="catalytic activity">
    <reaction evidence="1">
        <text>(6R)-5,10-methenyltetrahydrofolate + H2O = (6R)-10-formyltetrahydrofolate + H(+)</text>
        <dbReference type="Rhea" id="RHEA:23700"/>
        <dbReference type="ChEBI" id="CHEBI:15377"/>
        <dbReference type="ChEBI" id="CHEBI:15378"/>
        <dbReference type="ChEBI" id="CHEBI:57455"/>
        <dbReference type="ChEBI" id="CHEBI:195366"/>
        <dbReference type="EC" id="3.5.4.9"/>
    </reaction>
</comment>
<comment type="pathway">
    <text evidence="1">One-carbon metabolism; tetrahydrofolate interconversion.</text>
</comment>
<comment type="subunit">
    <text evidence="1">Homodimer.</text>
</comment>
<comment type="disruption phenotype">
    <text evidence="2">Probably essential, it was not disrupted in a global transposon mutagenesis study.</text>
</comment>
<comment type="similarity">
    <text evidence="1">Belongs to the tetrahydrofolate dehydrogenase/cyclohydrolase family.</text>
</comment>